<sequence length="103" mass="11805">MVEILLAFNIDVYVLMDEDPGNQSTQQLISRIRNLIGDKLFLQSPNLEGIFNFDQIRRDHGIQRNKFSKEIALKVLPTWFESNSVPPVYESLKNIIGVTNENG</sequence>
<proteinExistence type="predicted"/>
<name>Y1008_ARCFU</name>
<accession>O29254</accession>
<keyword id="KW-1185">Reference proteome</keyword>
<dbReference type="EMBL" id="AE000782">
    <property type="protein sequence ID" value="AAB90236.1"/>
    <property type="molecule type" value="Genomic_DNA"/>
</dbReference>
<dbReference type="PIR" id="H69375">
    <property type="entry name" value="H69375"/>
</dbReference>
<dbReference type="PaxDb" id="224325-AF_1008"/>
<dbReference type="EnsemblBacteria" id="AAB90236">
    <property type="protein sequence ID" value="AAB90236"/>
    <property type="gene ID" value="AF_1008"/>
</dbReference>
<dbReference type="KEGG" id="afu:AF_1008"/>
<dbReference type="HOGENOM" id="CLU_2257202_0_0_2"/>
<dbReference type="Proteomes" id="UP000002199">
    <property type="component" value="Chromosome"/>
</dbReference>
<feature type="chain" id="PRO_0000127951" description="Uncharacterized protein AF_1008">
    <location>
        <begin position="1"/>
        <end position="103"/>
    </location>
</feature>
<gene>
    <name type="ordered locus">AF_1008</name>
</gene>
<protein>
    <recommendedName>
        <fullName>Uncharacterized protein AF_1008</fullName>
    </recommendedName>
</protein>
<organism>
    <name type="scientific">Archaeoglobus fulgidus (strain ATCC 49558 / DSM 4304 / JCM 9628 / NBRC 100126 / VC-16)</name>
    <dbReference type="NCBI Taxonomy" id="224325"/>
    <lineage>
        <taxon>Archaea</taxon>
        <taxon>Methanobacteriati</taxon>
        <taxon>Methanobacteriota</taxon>
        <taxon>Archaeoglobi</taxon>
        <taxon>Archaeoglobales</taxon>
        <taxon>Archaeoglobaceae</taxon>
        <taxon>Archaeoglobus</taxon>
    </lineage>
</organism>
<reference key="1">
    <citation type="journal article" date="1997" name="Nature">
        <title>The complete genome sequence of the hyperthermophilic, sulphate-reducing archaeon Archaeoglobus fulgidus.</title>
        <authorList>
            <person name="Klenk H.-P."/>
            <person name="Clayton R.A."/>
            <person name="Tomb J.-F."/>
            <person name="White O."/>
            <person name="Nelson K.E."/>
            <person name="Ketchum K.A."/>
            <person name="Dodson R.J."/>
            <person name="Gwinn M.L."/>
            <person name="Hickey E.K."/>
            <person name="Peterson J.D."/>
            <person name="Richardson D.L."/>
            <person name="Kerlavage A.R."/>
            <person name="Graham D.E."/>
            <person name="Kyrpides N.C."/>
            <person name="Fleischmann R.D."/>
            <person name="Quackenbush J."/>
            <person name="Lee N.H."/>
            <person name="Sutton G.G."/>
            <person name="Gill S.R."/>
            <person name="Kirkness E.F."/>
            <person name="Dougherty B.A."/>
            <person name="McKenney K."/>
            <person name="Adams M.D."/>
            <person name="Loftus B.J."/>
            <person name="Peterson S.N."/>
            <person name="Reich C.I."/>
            <person name="McNeil L.K."/>
            <person name="Badger J.H."/>
            <person name="Glodek A."/>
            <person name="Zhou L."/>
            <person name="Overbeek R."/>
            <person name="Gocayne J.D."/>
            <person name="Weidman J.F."/>
            <person name="McDonald L.A."/>
            <person name="Utterback T.R."/>
            <person name="Cotton M.D."/>
            <person name="Spriggs T."/>
            <person name="Artiach P."/>
            <person name="Kaine B.P."/>
            <person name="Sykes S.M."/>
            <person name="Sadow P.W."/>
            <person name="D'Andrea K.P."/>
            <person name="Bowman C."/>
            <person name="Fujii C."/>
            <person name="Garland S.A."/>
            <person name="Mason T.M."/>
            <person name="Olsen G.J."/>
            <person name="Fraser C.M."/>
            <person name="Smith H.O."/>
            <person name="Woese C.R."/>
            <person name="Venter J.C."/>
        </authorList>
    </citation>
    <scope>NUCLEOTIDE SEQUENCE [LARGE SCALE GENOMIC DNA]</scope>
    <source>
        <strain>ATCC 49558 / DSM 4304 / JCM 9628 / NBRC 100126 / VC-16</strain>
    </source>
</reference>